<organism>
    <name type="scientific">Haemophilus influenzae (strain ATCC 51907 / DSM 11121 / KW20 / Rd)</name>
    <dbReference type="NCBI Taxonomy" id="71421"/>
    <lineage>
        <taxon>Bacteria</taxon>
        <taxon>Pseudomonadati</taxon>
        <taxon>Pseudomonadota</taxon>
        <taxon>Gammaproteobacteria</taxon>
        <taxon>Pasteurellales</taxon>
        <taxon>Pasteurellaceae</taxon>
        <taxon>Haemophilus</taxon>
    </lineage>
</organism>
<reference key="1">
    <citation type="journal article" date="1993" name="Mol. Microbiol.">
        <title>Molecular and genetic characterization of superoxide dismutase in Haemophilus influenzae type b.</title>
        <authorList>
            <person name="Kroll J.S."/>
            <person name="Langford P.R."/>
            <person name="Saah J.R."/>
            <person name="Loynds B.M."/>
        </authorList>
    </citation>
    <scope>NUCLEOTIDE SEQUENCE [GENOMIC DNA]</scope>
    <source>
        <strain>Eagan / Serotype B</strain>
    </source>
</reference>
<reference key="2">
    <citation type="journal article" date="1995" name="Science">
        <title>Whole-genome random sequencing and assembly of Haemophilus influenzae Rd.</title>
        <authorList>
            <person name="Fleischmann R.D."/>
            <person name="Adams M.D."/>
            <person name="White O."/>
            <person name="Clayton R.A."/>
            <person name="Kirkness E.F."/>
            <person name="Kerlavage A.R."/>
            <person name="Bult C.J."/>
            <person name="Tomb J.-F."/>
            <person name="Dougherty B.A."/>
            <person name="Merrick J.M."/>
            <person name="McKenney K."/>
            <person name="Sutton G.G."/>
            <person name="FitzHugh W."/>
            <person name="Fields C.A."/>
            <person name="Gocayne J.D."/>
            <person name="Scott J.D."/>
            <person name="Shirley R."/>
            <person name="Liu L.-I."/>
            <person name="Glodek A."/>
            <person name="Kelley J.M."/>
            <person name="Weidman J.F."/>
            <person name="Phillips C.A."/>
            <person name="Spriggs T."/>
            <person name="Hedblom E."/>
            <person name="Cotton M.D."/>
            <person name="Utterback T.R."/>
            <person name="Hanna M.C."/>
            <person name="Nguyen D.T."/>
            <person name="Saudek D.M."/>
            <person name="Brandon R.C."/>
            <person name="Fine L.D."/>
            <person name="Fritchman J.L."/>
            <person name="Fuhrmann J.L."/>
            <person name="Geoghagen N.S.M."/>
            <person name="Gnehm C.L."/>
            <person name="McDonald L.A."/>
            <person name="Small K.V."/>
            <person name="Fraser C.M."/>
            <person name="Smith H.O."/>
            <person name="Venter J.C."/>
        </authorList>
    </citation>
    <scope>NUCLEOTIDE SEQUENCE [LARGE SCALE GENOMIC DNA]</scope>
    <source>
        <strain>ATCC 51907 / DSM 11121 / KW20 / Rd</strain>
    </source>
</reference>
<reference key="3">
    <citation type="journal article" date="2000" name="Electrophoresis">
        <title>Two-dimensional map of the proteome of Haemophilus influenzae.</title>
        <authorList>
            <person name="Langen H."/>
            <person name="Takacs B."/>
            <person name="Evers S."/>
            <person name="Berndt P."/>
            <person name="Lahm H.W."/>
            <person name="Wipf B."/>
            <person name="Gray C."/>
            <person name="Fountoulakis M."/>
        </authorList>
    </citation>
    <scope>PROTEIN SEQUENCE OF 2-6</scope>
    <source>
        <strain>ATCC 51907 / DSM 11121 / KW20 / Rd</strain>
    </source>
</reference>
<feature type="initiator methionine" description="Removed" evidence="2">
    <location>
        <position position="1"/>
    </location>
</feature>
<feature type="chain" id="PRO_0000160038" description="Superoxide dismutase [Mn]">
    <location>
        <begin position="2"/>
        <end position="215"/>
    </location>
</feature>
<feature type="binding site" evidence="1">
    <location>
        <position position="27"/>
    </location>
    <ligand>
        <name>Mn(2+)</name>
        <dbReference type="ChEBI" id="CHEBI:29035"/>
    </ligand>
</feature>
<feature type="binding site" evidence="1">
    <location>
        <position position="83"/>
    </location>
    <ligand>
        <name>Mn(2+)</name>
        <dbReference type="ChEBI" id="CHEBI:29035"/>
    </ligand>
</feature>
<feature type="binding site" evidence="1">
    <location>
        <position position="170"/>
    </location>
    <ligand>
        <name>Mn(2+)</name>
        <dbReference type="ChEBI" id="CHEBI:29035"/>
    </ligand>
</feature>
<feature type="binding site" evidence="1">
    <location>
        <position position="174"/>
    </location>
    <ligand>
        <name>Mn(2+)</name>
        <dbReference type="ChEBI" id="CHEBI:29035"/>
    </ligand>
</feature>
<feature type="sequence conflict" description="In Ref. 1." evidence="3" ref="1">
    <original>TAHSNCAK</original>
    <variation>STL</variation>
    <location>
        <begin position="208"/>
        <end position="215"/>
    </location>
</feature>
<evidence type="ECO:0000250" key="1"/>
<evidence type="ECO:0000269" key="2">
    <source>
    </source>
</evidence>
<evidence type="ECO:0000305" key="3"/>
<keyword id="KW-0903">Direct protein sequencing</keyword>
<keyword id="KW-0464">Manganese</keyword>
<keyword id="KW-0479">Metal-binding</keyword>
<keyword id="KW-0560">Oxidoreductase</keyword>
<keyword id="KW-1185">Reference proteome</keyword>
<name>SODM_HAEIN</name>
<gene>
    <name type="primary">sodA</name>
    <name type="ordered locus">HI_1088</name>
</gene>
<dbReference type="EC" id="1.15.1.1"/>
<dbReference type="EMBL" id="X73832">
    <property type="protein sequence ID" value="CAA52054.1"/>
    <property type="molecule type" value="Genomic_DNA"/>
</dbReference>
<dbReference type="EMBL" id="L42023">
    <property type="protein sequence ID" value="AAC22745.1"/>
    <property type="molecule type" value="Genomic_DNA"/>
</dbReference>
<dbReference type="PIR" id="C64182">
    <property type="entry name" value="C64182"/>
</dbReference>
<dbReference type="PIR" id="S39871">
    <property type="entry name" value="S39871"/>
</dbReference>
<dbReference type="RefSeq" id="NP_439245.1">
    <property type="nucleotide sequence ID" value="NC_000907.1"/>
</dbReference>
<dbReference type="SMR" id="P43725"/>
<dbReference type="STRING" id="71421.HI_1088"/>
<dbReference type="EnsemblBacteria" id="AAC22745">
    <property type="protein sequence ID" value="AAC22745"/>
    <property type="gene ID" value="HI_1088"/>
</dbReference>
<dbReference type="KEGG" id="hin:HI_1088"/>
<dbReference type="PATRIC" id="fig|71421.8.peg.1133"/>
<dbReference type="eggNOG" id="COG0605">
    <property type="taxonomic scope" value="Bacteria"/>
</dbReference>
<dbReference type="HOGENOM" id="CLU_031625_0_1_6"/>
<dbReference type="OrthoDB" id="9803125at2"/>
<dbReference type="PhylomeDB" id="P43725"/>
<dbReference type="BioCyc" id="HINF71421:G1GJ1-1123-MONOMER"/>
<dbReference type="Proteomes" id="UP000000579">
    <property type="component" value="Chromosome"/>
</dbReference>
<dbReference type="GO" id="GO:0005737">
    <property type="term" value="C:cytoplasm"/>
    <property type="evidence" value="ECO:0000318"/>
    <property type="project" value="GO_Central"/>
</dbReference>
<dbReference type="GO" id="GO:0046872">
    <property type="term" value="F:metal ion binding"/>
    <property type="evidence" value="ECO:0007669"/>
    <property type="project" value="UniProtKB-KW"/>
</dbReference>
<dbReference type="GO" id="GO:0004784">
    <property type="term" value="F:superoxide dismutase activity"/>
    <property type="evidence" value="ECO:0000318"/>
    <property type="project" value="GO_Central"/>
</dbReference>
<dbReference type="GO" id="GO:0019430">
    <property type="term" value="P:removal of superoxide radicals"/>
    <property type="evidence" value="ECO:0000318"/>
    <property type="project" value="GO_Central"/>
</dbReference>
<dbReference type="FunFam" id="1.10.287.990:FF:000001">
    <property type="entry name" value="Superoxide dismutase"/>
    <property type="match status" value="1"/>
</dbReference>
<dbReference type="FunFam" id="3.55.40.20:FF:000001">
    <property type="entry name" value="Superoxide dismutase"/>
    <property type="match status" value="1"/>
</dbReference>
<dbReference type="Gene3D" id="1.10.287.990">
    <property type="entry name" value="Fe,Mn superoxide dismutase (SOD) domain"/>
    <property type="match status" value="1"/>
</dbReference>
<dbReference type="Gene3D" id="3.55.40.20">
    <property type="entry name" value="Iron/manganese superoxide dismutase, C-terminal domain"/>
    <property type="match status" value="1"/>
</dbReference>
<dbReference type="InterPro" id="IPR001189">
    <property type="entry name" value="Mn/Fe_SOD"/>
</dbReference>
<dbReference type="InterPro" id="IPR019833">
    <property type="entry name" value="Mn/Fe_SOD_BS"/>
</dbReference>
<dbReference type="InterPro" id="IPR019832">
    <property type="entry name" value="Mn/Fe_SOD_C"/>
</dbReference>
<dbReference type="InterPro" id="IPR019831">
    <property type="entry name" value="Mn/Fe_SOD_N"/>
</dbReference>
<dbReference type="InterPro" id="IPR036324">
    <property type="entry name" value="Mn/Fe_SOD_N_sf"/>
</dbReference>
<dbReference type="InterPro" id="IPR036314">
    <property type="entry name" value="SOD_C_sf"/>
</dbReference>
<dbReference type="NCBIfam" id="NF008177">
    <property type="entry name" value="PRK10925.1"/>
    <property type="match status" value="1"/>
</dbReference>
<dbReference type="PANTHER" id="PTHR43595">
    <property type="entry name" value="37S RIBOSOMAL PROTEIN S26, MITOCHONDRIAL"/>
    <property type="match status" value="1"/>
</dbReference>
<dbReference type="PANTHER" id="PTHR43595:SF2">
    <property type="entry name" value="SMALL RIBOSOMAL SUBUNIT PROTEIN MS42"/>
    <property type="match status" value="1"/>
</dbReference>
<dbReference type="Pfam" id="PF02777">
    <property type="entry name" value="Sod_Fe_C"/>
    <property type="match status" value="1"/>
</dbReference>
<dbReference type="Pfam" id="PF00081">
    <property type="entry name" value="Sod_Fe_N"/>
    <property type="match status" value="1"/>
</dbReference>
<dbReference type="PIRSF" id="PIRSF000349">
    <property type="entry name" value="SODismutase"/>
    <property type="match status" value="1"/>
</dbReference>
<dbReference type="PRINTS" id="PR01703">
    <property type="entry name" value="MNSODISMTASE"/>
</dbReference>
<dbReference type="SUPFAM" id="SSF54719">
    <property type="entry name" value="Fe,Mn superoxide dismutase (SOD), C-terminal domain"/>
    <property type="match status" value="1"/>
</dbReference>
<dbReference type="SUPFAM" id="SSF46609">
    <property type="entry name" value="Fe,Mn superoxide dismutase (SOD), N-terminal domain"/>
    <property type="match status" value="1"/>
</dbReference>
<dbReference type="PROSITE" id="PS00088">
    <property type="entry name" value="SOD_MN"/>
    <property type="match status" value="1"/>
</dbReference>
<comment type="function">
    <text>Destroys superoxide anion radicals which are normally produced within the cells and which are toxic to biological systems.</text>
</comment>
<comment type="catalytic activity">
    <reaction>
        <text>2 superoxide + 2 H(+) = H2O2 + O2</text>
        <dbReference type="Rhea" id="RHEA:20696"/>
        <dbReference type="ChEBI" id="CHEBI:15378"/>
        <dbReference type="ChEBI" id="CHEBI:15379"/>
        <dbReference type="ChEBI" id="CHEBI:16240"/>
        <dbReference type="ChEBI" id="CHEBI:18421"/>
        <dbReference type="EC" id="1.15.1.1"/>
    </reaction>
</comment>
<comment type="cofactor">
    <cofactor evidence="1">
        <name>Mn(2+)</name>
        <dbReference type="ChEBI" id="CHEBI:29035"/>
    </cofactor>
    <text evidence="1">Binds 1 Mn(2+) ion per subunit.</text>
</comment>
<comment type="subunit">
    <text evidence="1">Homodimer.</text>
</comment>
<comment type="similarity">
    <text evidence="3">Belongs to the iron/manganese superoxide dismutase family.</text>
</comment>
<proteinExistence type="evidence at protein level"/>
<protein>
    <recommendedName>
        <fullName>Superoxide dismutase [Mn]</fullName>
        <ecNumber>1.15.1.1</ecNumber>
    </recommendedName>
</protein>
<accession>P43725</accession>
<sequence length="215" mass="24110">MSYTLPELGYAYNALEPHFDAQTMEIHHSKHHQAYVNNANAALEGLPAELVEMYPGHLISNLDKIPAEKRGALRNNAGGHTNHSLFWKSLKKGTTLQGALKDAIERDFGSVDAFKAEFEKAAATRFGSGWAWLVLTAEGKLAVVSTANQDNPLMGKEVAGCEGFPLLGLDVWEHAYYLKFQNRRPDYIKEFWNVVNWDFVAERFEQKTAHSNCAK</sequence>